<protein>
    <recommendedName>
        <fullName evidence="1">UDP-N-acetylglucosamine--N-acetylmuramyl-(pentapeptide) pyrophosphoryl-undecaprenol N-acetylglucosamine transferase</fullName>
        <ecNumber evidence="1">2.4.1.227</ecNumber>
    </recommendedName>
    <alternativeName>
        <fullName evidence="1">Undecaprenyl-PP-MurNAc-pentapeptide-UDPGlcNAc GlcNAc transferase</fullName>
    </alternativeName>
</protein>
<feature type="chain" id="PRO_1000116484" description="UDP-N-acetylglucosamine--N-acetylmuramyl-(pentapeptide) pyrophosphoryl-undecaprenol N-acetylglucosamine transferase">
    <location>
        <begin position="1"/>
        <end position="405"/>
    </location>
</feature>
<feature type="binding site" evidence="1">
    <location>
        <begin position="11"/>
        <end position="13"/>
    </location>
    <ligand>
        <name>UDP-N-acetyl-alpha-D-glucosamine</name>
        <dbReference type="ChEBI" id="CHEBI:57705"/>
    </ligand>
</feature>
<feature type="binding site" evidence="1">
    <location>
        <position position="127"/>
    </location>
    <ligand>
        <name>UDP-N-acetyl-alpha-D-glucosamine</name>
        <dbReference type="ChEBI" id="CHEBI:57705"/>
    </ligand>
</feature>
<feature type="binding site" evidence="1">
    <location>
        <position position="168"/>
    </location>
    <ligand>
        <name>UDP-N-acetyl-alpha-D-glucosamine</name>
        <dbReference type="ChEBI" id="CHEBI:57705"/>
    </ligand>
</feature>
<feature type="binding site" evidence="1">
    <location>
        <position position="191"/>
    </location>
    <ligand>
        <name>UDP-N-acetyl-alpha-D-glucosamine</name>
        <dbReference type="ChEBI" id="CHEBI:57705"/>
    </ligand>
</feature>
<feature type="binding site" evidence="1">
    <location>
        <position position="248"/>
    </location>
    <ligand>
        <name>UDP-N-acetyl-alpha-D-glucosamine</name>
        <dbReference type="ChEBI" id="CHEBI:57705"/>
    </ligand>
</feature>
<feature type="binding site" evidence="1">
    <location>
        <position position="293"/>
    </location>
    <ligand>
        <name>UDP-N-acetyl-alpha-D-glucosamine</name>
        <dbReference type="ChEBI" id="CHEBI:57705"/>
    </ligand>
</feature>
<name>MURG_SORC5</name>
<sequence>MVTVLIAGGGTGGHVFPMIAVGDAVRAAARDEEARVVYVGTARGIEVRVMGERGDNLELLHVLPLRGGGLSGFVRGAARAGSVLPEARRLVERLDARVALSLGGYAGGPVSLAARSLGVPVAILEPNSVLGLSNRLLAPIVDRAYVAFPETARALRPSTVRLFGVPLRRAFARAPYAPREGALRLLVLGGSQGALALNDVVPRAIARGRERGADLEVVHQTGRDREAAVRALYAELGLAGRARVVPFIDDVAEALAAADVVIARAGASTLAELCAVGRPSILIPYPFAADNHQLRNAQSLERASAAVAIAQGDATELRLADEIARLAAAPALRARMADAAAAFATRDAAARVAADLLELARAPRHRALRFPTLGGRAARAGEAQRGAVTNQAAPLGAGLGWEEAG</sequence>
<proteinExistence type="inferred from homology"/>
<accession>A9FI55</accession>
<keyword id="KW-0131">Cell cycle</keyword>
<keyword id="KW-0132">Cell division</keyword>
<keyword id="KW-0997">Cell inner membrane</keyword>
<keyword id="KW-1003">Cell membrane</keyword>
<keyword id="KW-0133">Cell shape</keyword>
<keyword id="KW-0961">Cell wall biogenesis/degradation</keyword>
<keyword id="KW-0328">Glycosyltransferase</keyword>
<keyword id="KW-0472">Membrane</keyword>
<keyword id="KW-0573">Peptidoglycan synthesis</keyword>
<keyword id="KW-1185">Reference proteome</keyword>
<keyword id="KW-0808">Transferase</keyword>
<organism>
    <name type="scientific">Sorangium cellulosum (strain So ce56)</name>
    <name type="common">Polyangium cellulosum (strain So ce56)</name>
    <dbReference type="NCBI Taxonomy" id="448385"/>
    <lineage>
        <taxon>Bacteria</taxon>
        <taxon>Pseudomonadati</taxon>
        <taxon>Myxococcota</taxon>
        <taxon>Polyangia</taxon>
        <taxon>Polyangiales</taxon>
        <taxon>Polyangiaceae</taxon>
        <taxon>Sorangium</taxon>
    </lineage>
</organism>
<comment type="function">
    <text evidence="1">Cell wall formation. Catalyzes the transfer of a GlcNAc subunit on undecaprenyl-pyrophosphoryl-MurNAc-pentapeptide (lipid intermediate I) to form undecaprenyl-pyrophosphoryl-MurNAc-(pentapeptide)GlcNAc (lipid intermediate II).</text>
</comment>
<comment type="catalytic activity">
    <reaction evidence="1">
        <text>di-trans,octa-cis-undecaprenyl diphospho-N-acetyl-alpha-D-muramoyl-L-alanyl-D-glutamyl-meso-2,6-diaminopimeloyl-D-alanyl-D-alanine + UDP-N-acetyl-alpha-D-glucosamine = di-trans,octa-cis-undecaprenyl diphospho-[N-acetyl-alpha-D-glucosaminyl-(1-&gt;4)]-N-acetyl-alpha-D-muramoyl-L-alanyl-D-glutamyl-meso-2,6-diaminopimeloyl-D-alanyl-D-alanine + UDP + H(+)</text>
        <dbReference type="Rhea" id="RHEA:31227"/>
        <dbReference type="ChEBI" id="CHEBI:15378"/>
        <dbReference type="ChEBI" id="CHEBI:57705"/>
        <dbReference type="ChEBI" id="CHEBI:58223"/>
        <dbReference type="ChEBI" id="CHEBI:61387"/>
        <dbReference type="ChEBI" id="CHEBI:61388"/>
        <dbReference type="EC" id="2.4.1.227"/>
    </reaction>
</comment>
<comment type="pathway">
    <text evidence="1">Cell wall biogenesis; peptidoglycan biosynthesis.</text>
</comment>
<comment type="subcellular location">
    <subcellularLocation>
        <location evidence="1">Cell inner membrane</location>
        <topology evidence="1">Peripheral membrane protein</topology>
        <orientation evidence="1">Cytoplasmic side</orientation>
    </subcellularLocation>
</comment>
<comment type="similarity">
    <text evidence="1">Belongs to the glycosyltransferase 28 family. MurG subfamily.</text>
</comment>
<dbReference type="EC" id="2.4.1.227" evidence="1"/>
<dbReference type="EMBL" id="AM746676">
    <property type="protein sequence ID" value="CAN91822.1"/>
    <property type="molecule type" value="Genomic_DNA"/>
</dbReference>
<dbReference type="RefSeq" id="WP_012234299.1">
    <property type="nucleotide sequence ID" value="NC_010162.1"/>
</dbReference>
<dbReference type="SMR" id="A9FI55"/>
<dbReference type="STRING" id="448385.sce1664"/>
<dbReference type="CAZy" id="GT28">
    <property type="family name" value="Glycosyltransferase Family 28"/>
</dbReference>
<dbReference type="KEGG" id="scl:sce1664"/>
<dbReference type="eggNOG" id="COG0707">
    <property type="taxonomic scope" value="Bacteria"/>
</dbReference>
<dbReference type="HOGENOM" id="CLU_037404_2_1_7"/>
<dbReference type="OrthoDB" id="9808936at2"/>
<dbReference type="BioCyc" id="SCEL448385:SCE_RS08565-MONOMER"/>
<dbReference type="UniPathway" id="UPA00219"/>
<dbReference type="Proteomes" id="UP000002139">
    <property type="component" value="Chromosome"/>
</dbReference>
<dbReference type="GO" id="GO:0005886">
    <property type="term" value="C:plasma membrane"/>
    <property type="evidence" value="ECO:0007669"/>
    <property type="project" value="UniProtKB-SubCell"/>
</dbReference>
<dbReference type="GO" id="GO:0051991">
    <property type="term" value="F:UDP-N-acetyl-D-glucosamine:N-acetylmuramoyl-L-alanyl-D-glutamyl-meso-2,6-diaminopimelyl-D-alanyl-D-alanine-diphosphoundecaprenol 4-beta-N-acetylglucosaminlytransferase activity"/>
    <property type="evidence" value="ECO:0007669"/>
    <property type="project" value="RHEA"/>
</dbReference>
<dbReference type="GO" id="GO:0050511">
    <property type="term" value="F:undecaprenyldiphospho-muramoylpentapeptide beta-N-acetylglucosaminyltransferase activity"/>
    <property type="evidence" value="ECO:0007669"/>
    <property type="project" value="UniProtKB-UniRule"/>
</dbReference>
<dbReference type="GO" id="GO:0005975">
    <property type="term" value="P:carbohydrate metabolic process"/>
    <property type="evidence" value="ECO:0007669"/>
    <property type="project" value="InterPro"/>
</dbReference>
<dbReference type="GO" id="GO:0051301">
    <property type="term" value="P:cell division"/>
    <property type="evidence" value="ECO:0007669"/>
    <property type="project" value="UniProtKB-KW"/>
</dbReference>
<dbReference type="GO" id="GO:0071555">
    <property type="term" value="P:cell wall organization"/>
    <property type="evidence" value="ECO:0007669"/>
    <property type="project" value="UniProtKB-KW"/>
</dbReference>
<dbReference type="GO" id="GO:0030259">
    <property type="term" value="P:lipid glycosylation"/>
    <property type="evidence" value="ECO:0007669"/>
    <property type="project" value="UniProtKB-UniRule"/>
</dbReference>
<dbReference type="GO" id="GO:0009252">
    <property type="term" value="P:peptidoglycan biosynthetic process"/>
    <property type="evidence" value="ECO:0007669"/>
    <property type="project" value="UniProtKB-UniRule"/>
</dbReference>
<dbReference type="GO" id="GO:0008360">
    <property type="term" value="P:regulation of cell shape"/>
    <property type="evidence" value="ECO:0007669"/>
    <property type="project" value="UniProtKB-KW"/>
</dbReference>
<dbReference type="CDD" id="cd03785">
    <property type="entry name" value="GT28_MurG"/>
    <property type="match status" value="1"/>
</dbReference>
<dbReference type="Gene3D" id="3.40.50.2000">
    <property type="entry name" value="Glycogen Phosphorylase B"/>
    <property type="match status" value="2"/>
</dbReference>
<dbReference type="HAMAP" id="MF_00033">
    <property type="entry name" value="MurG"/>
    <property type="match status" value="1"/>
</dbReference>
<dbReference type="InterPro" id="IPR006009">
    <property type="entry name" value="GlcNAc_MurG"/>
</dbReference>
<dbReference type="InterPro" id="IPR007235">
    <property type="entry name" value="Glyco_trans_28_C"/>
</dbReference>
<dbReference type="InterPro" id="IPR004276">
    <property type="entry name" value="GlycoTrans_28_N"/>
</dbReference>
<dbReference type="NCBIfam" id="TIGR01133">
    <property type="entry name" value="murG"/>
    <property type="match status" value="1"/>
</dbReference>
<dbReference type="PANTHER" id="PTHR21015:SF22">
    <property type="entry name" value="GLYCOSYLTRANSFERASE"/>
    <property type="match status" value="1"/>
</dbReference>
<dbReference type="PANTHER" id="PTHR21015">
    <property type="entry name" value="UDP-N-ACETYLGLUCOSAMINE--N-ACETYLMURAMYL-(PENTAPEPTIDE) PYROPHOSPHORYL-UNDECAPRENOL N-ACETYLGLUCOSAMINE TRANSFERASE 1"/>
    <property type="match status" value="1"/>
</dbReference>
<dbReference type="Pfam" id="PF04101">
    <property type="entry name" value="Glyco_tran_28_C"/>
    <property type="match status" value="1"/>
</dbReference>
<dbReference type="Pfam" id="PF03033">
    <property type="entry name" value="Glyco_transf_28"/>
    <property type="match status" value="1"/>
</dbReference>
<dbReference type="SUPFAM" id="SSF53756">
    <property type="entry name" value="UDP-Glycosyltransferase/glycogen phosphorylase"/>
    <property type="match status" value="1"/>
</dbReference>
<reference key="1">
    <citation type="journal article" date="2007" name="Nat. Biotechnol.">
        <title>Complete genome sequence of the myxobacterium Sorangium cellulosum.</title>
        <authorList>
            <person name="Schneiker S."/>
            <person name="Perlova O."/>
            <person name="Kaiser O."/>
            <person name="Gerth K."/>
            <person name="Alici A."/>
            <person name="Altmeyer M.O."/>
            <person name="Bartels D."/>
            <person name="Bekel T."/>
            <person name="Beyer S."/>
            <person name="Bode E."/>
            <person name="Bode H.B."/>
            <person name="Bolten C.J."/>
            <person name="Choudhuri J.V."/>
            <person name="Doss S."/>
            <person name="Elnakady Y.A."/>
            <person name="Frank B."/>
            <person name="Gaigalat L."/>
            <person name="Goesmann A."/>
            <person name="Groeger C."/>
            <person name="Gross F."/>
            <person name="Jelsbak L."/>
            <person name="Jelsbak L."/>
            <person name="Kalinowski J."/>
            <person name="Kegler C."/>
            <person name="Knauber T."/>
            <person name="Konietzny S."/>
            <person name="Kopp M."/>
            <person name="Krause L."/>
            <person name="Krug D."/>
            <person name="Linke B."/>
            <person name="Mahmud T."/>
            <person name="Martinez-Arias R."/>
            <person name="McHardy A.C."/>
            <person name="Merai M."/>
            <person name="Meyer F."/>
            <person name="Mormann S."/>
            <person name="Munoz-Dorado J."/>
            <person name="Perez J."/>
            <person name="Pradella S."/>
            <person name="Rachid S."/>
            <person name="Raddatz G."/>
            <person name="Rosenau F."/>
            <person name="Rueckert C."/>
            <person name="Sasse F."/>
            <person name="Scharfe M."/>
            <person name="Schuster S.C."/>
            <person name="Suen G."/>
            <person name="Treuner-Lange A."/>
            <person name="Velicer G.J."/>
            <person name="Vorholter F.-J."/>
            <person name="Weissman K.J."/>
            <person name="Welch R.D."/>
            <person name="Wenzel S.C."/>
            <person name="Whitworth D.E."/>
            <person name="Wilhelm S."/>
            <person name="Wittmann C."/>
            <person name="Bloecker H."/>
            <person name="Puehler A."/>
            <person name="Mueller R."/>
        </authorList>
    </citation>
    <scope>NUCLEOTIDE SEQUENCE [LARGE SCALE GENOMIC DNA]</scope>
    <source>
        <strain>So ce56</strain>
    </source>
</reference>
<gene>
    <name evidence="1" type="primary">murG</name>
    <name type="ordered locus">sce1664</name>
</gene>
<evidence type="ECO:0000255" key="1">
    <source>
        <dbReference type="HAMAP-Rule" id="MF_00033"/>
    </source>
</evidence>